<feature type="chain" id="PRO_1000198971" description="Aspartate--tRNA ligase">
    <location>
        <begin position="1"/>
        <end position="593"/>
    </location>
</feature>
<feature type="region of interest" description="Aspartate" evidence="1">
    <location>
        <begin position="204"/>
        <end position="207"/>
    </location>
</feature>
<feature type="binding site" evidence="1">
    <location>
        <position position="180"/>
    </location>
    <ligand>
        <name>L-aspartate</name>
        <dbReference type="ChEBI" id="CHEBI:29991"/>
    </ligand>
</feature>
<feature type="binding site" evidence="1">
    <location>
        <begin position="226"/>
        <end position="228"/>
    </location>
    <ligand>
        <name>ATP</name>
        <dbReference type="ChEBI" id="CHEBI:30616"/>
    </ligand>
</feature>
<feature type="binding site" evidence="1">
    <location>
        <position position="226"/>
    </location>
    <ligand>
        <name>L-aspartate</name>
        <dbReference type="ChEBI" id="CHEBI:29991"/>
    </ligand>
</feature>
<feature type="binding site" evidence="1">
    <location>
        <position position="235"/>
    </location>
    <ligand>
        <name>ATP</name>
        <dbReference type="ChEBI" id="CHEBI:30616"/>
    </ligand>
</feature>
<feature type="binding site" evidence="1">
    <location>
        <position position="453"/>
    </location>
    <ligand>
        <name>L-aspartate</name>
        <dbReference type="ChEBI" id="CHEBI:29991"/>
    </ligand>
</feature>
<feature type="binding site" evidence="1">
    <location>
        <position position="487"/>
    </location>
    <ligand>
        <name>ATP</name>
        <dbReference type="ChEBI" id="CHEBI:30616"/>
    </ligand>
</feature>
<feature type="binding site" evidence="1">
    <location>
        <position position="494"/>
    </location>
    <ligand>
        <name>L-aspartate</name>
        <dbReference type="ChEBI" id="CHEBI:29991"/>
    </ligand>
</feature>
<feature type="binding site" evidence="1">
    <location>
        <begin position="539"/>
        <end position="542"/>
    </location>
    <ligand>
        <name>ATP</name>
        <dbReference type="ChEBI" id="CHEBI:30616"/>
    </ligand>
</feature>
<evidence type="ECO:0000255" key="1">
    <source>
        <dbReference type="HAMAP-Rule" id="MF_00044"/>
    </source>
</evidence>
<comment type="function">
    <text evidence="1">Catalyzes the attachment of L-aspartate to tRNA(Asp) in a two-step reaction: L-aspartate is first activated by ATP to form Asp-AMP and then transferred to the acceptor end of tRNA(Asp).</text>
</comment>
<comment type="catalytic activity">
    <reaction evidence="1">
        <text>tRNA(Asp) + L-aspartate + ATP = L-aspartyl-tRNA(Asp) + AMP + diphosphate</text>
        <dbReference type="Rhea" id="RHEA:19649"/>
        <dbReference type="Rhea" id="RHEA-COMP:9660"/>
        <dbReference type="Rhea" id="RHEA-COMP:9678"/>
        <dbReference type="ChEBI" id="CHEBI:29991"/>
        <dbReference type="ChEBI" id="CHEBI:30616"/>
        <dbReference type="ChEBI" id="CHEBI:33019"/>
        <dbReference type="ChEBI" id="CHEBI:78442"/>
        <dbReference type="ChEBI" id="CHEBI:78516"/>
        <dbReference type="ChEBI" id="CHEBI:456215"/>
        <dbReference type="EC" id="6.1.1.12"/>
    </reaction>
</comment>
<comment type="subunit">
    <text evidence="1">Homodimer.</text>
</comment>
<comment type="subcellular location">
    <subcellularLocation>
        <location evidence="1">Cytoplasm</location>
    </subcellularLocation>
</comment>
<comment type="similarity">
    <text evidence="1">Belongs to the class-II aminoacyl-tRNA synthetase family. Type 1 subfamily.</text>
</comment>
<keyword id="KW-0030">Aminoacyl-tRNA synthetase</keyword>
<keyword id="KW-0067">ATP-binding</keyword>
<keyword id="KW-0963">Cytoplasm</keyword>
<keyword id="KW-0436">Ligase</keyword>
<keyword id="KW-0547">Nucleotide-binding</keyword>
<keyword id="KW-0648">Protein biosynthesis</keyword>
<sequence length="593" mass="67802">MGEALRGLKRTIMCGEPRENNIGEKVTVMGWVQRKRNLGGLIFVDLRDRTGIMQIVFGEEINKEAFEKSDNVKSEYCIAVTGEIVKRQSPNNDMETGAVELKGEDIKILSESETPPIYIKEGLDASENVRLKYRYLDLRRPDMQKIFMIRHKTCKVVRDFLDENGFLEMETPILTKSTPEGARDYLVPSRNYKGMFYALPQSPQIFKQLLMVSGYDKYFQITKCFRDEDLRANRQPEFTQIDMELSFVEEDDVIDLNEKLLAKVFKEVAGIDVKLPIERMPYKIAMEKYGSDKPDLRFGMEINDLTEAVKNSEFKVFKGAIEAGGSVRAIKAENCATMGRKQIDKLQDFVKTYKAKGLAWIAYKEDEIKSPIAKFLTEEEMKAILEKMDAKVGDLILIVADKNNVVFESLGALRLHLAKELDIINKDEFRFVWITEFPLLAYNEEEGRYQAEHHPFTAIMDEDIDLLDTDPGKVRAKAYDIVLNGEELGGGSIRIHDSKLQEKMFSVLGFTKEKAWERFGFLLEAFKFGPPPHGGLAYGLDRMIMFLAGTENIKDVITFPKNQNAFCPLTEAPNVVDENQLEELGIKKIEKED</sequence>
<name>SYD_CLOBJ</name>
<reference key="1">
    <citation type="submission" date="2008-10" db="EMBL/GenBank/DDBJ databases">
        <title>Genome sequence of Clostridium botulinum A2 Kyoto.</title>
        <authorList>
            <person name="Shrivastava S."/>
            <person name="Brinkac L.M."/>
            <person name="Brown J.L."/>
            <person name="Bruce D."/>
            <person name="Detter C.C."/>
            <person name="Johnson E.A."/>
            <person name="Munk C.A."/>
            <person name="Smith L.A."/>
            <person name="Smith T.J."/>
            <person name="Sutton G."/>
            <person name="Brettin T.S."/>
        </authorList>
    </citation>
    <scope>NUCLEOTIDE SEQUENCE [LARGE SCALE GENOMIC DNA]</scope>
    <source>
        <strain>Kyoto / Type A2</strain>
    </source>
</reference>
<accession>C1FKE5</accession>
<proteinExistence type="inferred from homology"/>
<gene>
    <name evidence="1" type="primary">aspS</name>
    <name type="ordered locus">CLM_3459</name>
</gene>
<protein>
    <recommendedName>
        <fullName evidence="1">Aspartate--tRNA ligase</fullName>
        <ecNumber evidence="1">6.1.1.12</ecNumber>
    </recommendedName>
    <alternativeName>
        <fullName evidence="1">Aspartyl-tRNA synthetase</fullName>
        <shortName evidence="1">AspRS</shortName>
    </alternativeName>
</protein>
<organism>
    <name type="scientific">Clostridium botulinum (strain Kyoto / Type A2)</name>
    <dbReference type="NCBI Taxonomy" id="536232"/>
    <lineage>
        <taxon>Bacteria</taxon>
        <taxon>Bacillati</taxon>
        <taxon>Bacillota</taxon>
        <taxon>Clostridia</taxon>
        <taxon>Eubacteriales</taxon>
        <taxon>Clostridiaceae</taxon>
        <taxon>Clostridium</taxon>
    </lineage>
</organism>
<dbReference type="EC" id="6.1.1.12" evidence="1"/>
<dbReference type="EMBL" id="CP001581">
    <property type="protein sequence ID" value="ACO83785.1"/>
    <property type="molecule type" value="Genomic_DNA"/>
</dbReference>
<dbReference type="RefSeq" id="WP_012703875.1">
    <property type="nucleotide sequence ID" value="NC_012563.1"/>
</dbReference>
<dbReference type="SMR" id="C1FKE5"/>
<dbReference type="KEGG" id="cby:CLM_3459"/>
<dbReference type="eggNOG" id="COG0173">
    <property type="taxonomic scope" value="Bacteria"/>
</dbReference>
<dbReference type="HOGENOM" id="CLU_014330_3_2_9"/>
<dbReference type="Proteomes" id="UP000001374">
    <property type="component" value="Chromosome"/>
</dbReference>
<dbReference type="GO" id="GO:0005737">
    <property type="term" value="C:cytoplasm"/>
    <property type="evidence" value="ECO:0007669"/>
    <property type="project" value="UniProtKB-SubCell"/>
</dbReference>
<dbReference type="GO" id="GO:0004815">
    <property type="term" value="F:aspartate-tRNA ligase activity"/>
    <property type="evidence" value="ECO:0007669"/>
    <property type="project" value="UniProtKB-UniRule"/>
</dbReference>
<dbReference type="GO" id="GO:0005524">
    <property type="term" value="F:ATP binding"/>
    <property type="evidence" value="ECO:0007669"/>
    <property type="project" value="UniProtKB-UniRule"/>
</dbReference>
<dbReference type="GO" id="GO:0140096">
    <property type="term" value="F:catalytic activity, acting on a protein"/>
    <property type="evidence" value="ECO:0007669"/>
    <property type="project" value="UniProtKB-ARBA"/>
</dbReference>
<dbReference type="GO" id="GO:0003676">
    <property type="term" value="F:nucleic acid binding"/>
    <property type="evidence" value="ECO:0007669"/>
    <property type="project" value="InterPro"/>
</dbReference>
<dbReference type="GO" id="GO:0016740">
    <property type="term" value="F:transferase activity"/>
    <property type="evidence" value="ECO:0007669"/>
    <property type="project" value="UniProtKB-ARBA"/>
</dbReference>
<dbReference type="GO" id="GO:0006422">
    <property type="term" value="P:aspartyl-tRNA aminoacylation"/>
    <property type="evidence" value="ECO:0007669"/>
    <property type="project" value="UniProtKB-UniRule"/>
</dbReference>
<dbReference type="CDD" id="cd00777">
    <property type="entry name" value="AspRS_core"/>
    <property type="match status" value="1"/>
</dbReference>
<dbReference type="CDD" id="cd04317">
    <property type="entry name" value="EcAspRS_like_N"/>
    <property type="match status" value="1"/>
</dbReference>
<dbReference type="Gene3D" id="3.30.930.10">
    <property type="entry name" value="Bira Bifunctional Protein, Domain 2"/>
    <property type="match status" value="1"/>
</dbReference>
<dbReference type="Gene3D" id="3.30.1360.30">
    <property type="entry name" value="GAD-like domain"/>
    <property type="match status" value="1"/>
</dbReference>
<dbReference type="Gene3D" id="2.40.50.140">
    <property type="entry name" value="Nucleic acid-binding proteins"/>
    <property type="match status" value="1"/>
</dbReference>
<dbReference type="HAMAP" id="MF_00044">
    <property type="entry name" value="Asp_tRNA_synth_type1"/>
    <property type="match status" value="1"/>
</dbReference>
<dbReference type="InterPro" id="IPR004364">
    <property type="entry name" value="Aa-tRNA-synt_II"/>
</dbReference>
<dbReference type="InterPro" id="IPR006195">
    <property type="entry name" value="aa-tRNA-synth_II"/>
</dbReference>
<dbReference type="InterPro" id="IPR045864">
    <property type="entry name" value="aa-tRNA-synth_II/BPL/LPL"/>
</dbReference>
<dbReference type="InterPro" id="IPR004524">
    <property type="entry name" value="Asp-tRNA-ligase_1"/>
</dbReference>
<dbReference type="InterPro" id="IPR047089">
    <property type="entry name" value="Asp-tRNA-ligase_1_N"/>
</dbReference>
<dbReference type="InterPro" id="IPR002312">
    <property type="entry name" value="Asp/Asn-tRNA-synth_IIb"/>
</dbReference>
<dbReference type="InterPro" id="IPR047090">
    <property type="entry name" value="AspRS_core"/>
</dbReference>
<dbReference type="InterPro" id="IPR004115">
    <property type="entry name" value="GAD-like_sf"/>
</dbReference>
<dbReference type="InterPro" id="IPR029351">
    <property type="entry name" value="GAD_dom"/>
</dbReference>
<dbReference type="InterPro" id="IPR012340">
    <property type="entry name" value="NA-bd_OB-fold"/>
</dbReference>
<dbReference type="InterPro" id="IPR004365">
    <property type="entry name" value="NA-bd_OB_tRNA"/>
</dbReference>
<dbReference type="NCBIfam" id="TIGR00459">
    <property type="entry name" value="aspS_bact"/>
    <property type="match status" value="1"/>
</dbReference>
<dbReference type="NCBIfam" id="NF001750">
    <property type="entry name" value="PRK00476.1"/>
    <property type="match status" value="1"/>
</dbReference>
<dbReference type="PANTHER" id="PTHR22594:SF5">
    <property type="entry name" value="ASPARTATE--TRNA LIGASE, MITOCHONDRIAL"/>
    <property type="match status" value="1"/>
</dbReference>
<dbReference type="PANTHER" id="PTHR22594">
    <property type="entry name" value="ASPARTYL/LYSYL-TRNA SYNTHETASE"/>
    <property type="match status" value="1"/>
</dbReference>
<dbReference type="Pfam" id="PF02938">
    <property type="entry name" value="GAD"/>
    <property type="match status" value="1"/>
</dbReference>
<dbReference type="Pfam" id="PF00152">
    <property type="entry name" value="tRNA-synt_2"/>
    <property type="match status" value="1"/>
</dbReference>
<dbReference type="Pfam" id="PF01336">
    <property type="entry name" value="tRNA_anti-codon"/>
    <property type="match status" value="1"/>
</dbReference>
<dbReference type="PRINTS" id="PR01042">
    <property type="entry name" value="TRNASYNTHASP"/>
</dbReference>
<dbReference type="SUPFAM" id="SSF55681">
    <property type="entry name" value="Class II aaRS and biotin synthetases"/>
    <property type="match status" value="1"/>
</dbReference>
<dbReference type="SUPFAM" id="SSF55261">
    <property type="entry name" value="GAD domain-like"/>
    <property type="match status" value="1"/>
</dbReference>
<dbReference type="SUPFAM" id="SSF50249">
    <property type="entry name" value="Nucleic acid-binding proteins"/>
    <property type="match status" value="1"/>
</dbReference>
<dbReference type="PROSITE" id="PS50862">
    <property type="entry name" value="AA_TRNA_LIGASE_II"/>
    <property type="match status" value="1"/>
</dbReference>